<protein>
    <recommendedName>
        <fullName evidence="1">S-adenosylmethionine decarboxylase proenzyme</fullName>
        <shortName evidence="1">AdoMetDC</shortName>
        <shortName evidence="1">SAMDC</shortName>
        <ecNumber evidence="1">4.1.1.50</ecNumber>
    </recommendedName>
    <component>
        <recommendedName>
            <fullName evidence="1">S-adenosylmethionine decarboxylase beta chain</fullName>
        </recommendedName>
    </component>
    <component>
        <recommendedName>
            <fullName evidence="1">S-adenosylmethionine decarboxylase alpha chain</fullName>
        </recommendedName>
    </component>
</protein>
<organism>
    <name type="scientific">Escherichia coli O81 (strain ED1a)</name>
    <dbReference type="NCBI Taxonomy" id="585397"/>
    <lineage>
        <taxon>Bacteria</taxon>
        <taxon>Pseudomonadati</taxon>
        <taxon>Pseudomonadota</taxon>
        <taxon>Gammaproteobacteria</taxon>
        <taxon>Enterobacterales</taxon>
        <taxon>Enterobacteriaceae</taxon>
        <taxon>Escherichia</taxon>
    </lineage>
</organism>
<keyword id="KW-0068">Autocatalytic cleavage</keyword>
<keyword id="KW-0210">Decarboxylase</keyword>
<keyword id="KW-0456">Lyase</keyword>
<keyword id="KW-0620">Polyamine biosynthesis</keyword>
<keyword id="KW-0670">Pyruvate</keyword>
<keyword id="KW-0949">S-adenosyl-L-methionine</keyword>
<keyword id="KW-0704">Schiff base</keyword>
<keyword id="KW-0745">Spermidine biosynthesis</keyword>
<keyword id="KW-0865">Zymogen</keyword>
<reference key="1">
    <citation type="journal article" date="2009" name="PLoS Genet.">
        <title>Organised genome dynamics in the Escherichia coli species results in highly diverse adaptive paths.</title>
        <authorList>
            <person name="Touchon M."/>
            <person name="Hoede C."/>
            <person name="Tenaillon O."/>
            <person name="Barbe V."/>
            <person name="Baeriswyl S."/>
            <person name="Bidet P."/>
            <person name="Bingen E."/>
            <person name="Bonacorsi S."/>
            <person name="Bouchier C."/>
            <person name="Bouvet O."/>
            <person name="Calteau A."/>
            <person name="Chiapello H."/>
            <person name="Clermont O."/>
            <person name="Cruveiller S."/>
            <person name="Danchin A."/>
            <person name="Diard M."/>
            <person name="Dossat C."/>
            <person name="Karoui M.E."/>
            <person name="Frapy E."/>
            <person name="Garry L."/>
            <person name="Ghigo J.M."/>
            <person name="Gilles A.M."/>
            <person name="Johnson J."/>
            <person name="Le Bouguenec C."/>
            <person name="Lescat M."/>
            <person name="Mangenot S."/>
            <person name="Martinez-Jehanne V."/>
            <person name="Matic I."/>
            <person name="Nassif X."/>
            <person name="Oztas S."/>
            <person name="Petit M.A."/>
            <person name="Pichon C."/>
            <person name="Rouy Z."/>
            <person name="Ruf C.S."/>
            <person name="Schneider D."/>
            <person name="Tourret J."/>
            <person name="Vacherie B."/>
            <person name="Vallenet D."/>
            <person name="Medigue C."/>
            <person name="Rocha E.P.C."/>
            <person name="Denamur E."/>
        </authorList>
    </citation>
    <scope>NUCLEOTIDE SEQUENCE [LARGE SCALE GENOMIC DNA]</scope>
    <source>
        <strain>ED1a</strain>
    </source>
</reference>
<feature type="chain" id="PRO_1000135447" description="S-adenosylmethionine decarboxylase beta chain" evidence="1">
    <location>
        <begin position="1"/>
        <end position="111"/>
    </location>
</feature>
<feature type="chain" id="PRO_1000135448" description="S-adenosylmethionine decarboxylase alpha chain" evidence="1">
    <location>
        <begin position="112"/>
        <end position="264"/>
    </location>
</feature>
<feature type="active site" description="Schiff-base intermediate with substrate; via pyruvic acid" evidence="1">
    <location>
        <position position="112"/>
    </location>
</feature>
<feature type="active site" description="Proton acceptor; for processing activity" evidence="1">
    <location>
        <position position="117"/>
    </location>
</feature>
<feature type="active site" description="Proton donor; for catalytic activity" evidence="1">
    <location>
        <position position="140"/>
    </location>
</feature>
<feature type="site" description="Cleavage (non-hydrolytic); by autolysis" evidence="1">
    <location>
        <begin position="111"/>
        <end position="112"/>
    </location>
</feature>
<feature type="modified residue" description="Pyruvic acid (Ser); by autocatalysis" evidence="1">
    <location>
        <position position="112"/>
    </location>
</feature>
<accession>B7MNY2</accession>
<gene>
    <name evidence="1" type="primary">speD</name>
    <name type="ordered locus">ECED1_0124</name>
</gene>
<name>SPED_ECO81</name>
<proteinExistence type="inferred from homology"/>
<evidence type="ECO:0000255" key="1">
    <source>
        <dbReference type="HAMAP-Rule" id="MF_00465"/>
    </source>
</evidence>
<dbReference type="EC" id="4.1.1.50" evidence="1"/>
<dbReference type="EMBL" id="CU928162">
    <property type="protein sequence ID" value="CAR06347.1"/>
    <property type="molecule type" value="Genomic_DNA"/>
</dbReference>
<dbReference type="RefSeq" id="WP_000734300.1">
    <property type="nucleotide sequence ID" value="NC_011745.1"/>
</dbReference>
<dbReference type="KEGG" id="ecq:ECED1_0124"/>
<dbReference type="HOGENOM" id="CLU_092007_0_0_6"/>
<dbReference type="UniPathway" id="UPA00331">
    <property type="reaction ID" value="UER00451"/>
</dbReference>
<dbReference type="Proteomes" id="UP000000748">
    <property type="component" value="Chromosome"/>
</dbReference>
<dbReference type="GO" id="GO:0005829">
    <property type="term" value="C:cytosol"/>
    <property type="evidence" value="ECO:0007669"/>
    <property type="project" value="TreeGrafter"/>
</dbReference>
<dbReference type="GO" id="GO:0004014">
    <property type="term" value="F:adenosylmethionine decarboxylase activity"/>
    <property type="evidence" value="ECO:0007669"/>
    <property type="project" value="UniProtKB-UniRule"/>
</dbReference>
<dbReference type="GO" id="GO:0008295">
    <property type="term" value="P:spermidine biosynthetic process"/>
    <property type="evidence" value="ECO:0007669"/>
    <property type="project" value="UniProtKB-UniRule"/>
</dbReference>
<dbReference type="FunFam" id="3.60.90.10:FF:000001">
    <property type="entry name" value="S-adenosylmethionine decarboxylase proenzyme"/>
    <property type="match status" value="1"/>
</dbReference>
<dbReference type="Gene3D" id="3.60.90.10">
    <property type="entry name" value="S-adenosylmethionine decarboxylase"/>
    <property type="match status" value="1"/>
</dbReference>
<dbReference type="HAMAP" id="MF_00465">
    <property type="entry name" value="AdoMetDC_2"/>
    <property type="match status" value="1"/>
</dbReference>
<dbReference type="InterPro" id="IPR003826">
    <property type="entry name" value="AdoMetDC_fam_prok"/>
</dbReference>
<dbReference type="InterPro" id="IPR009165">
    <property type="entry name" value="S-AdoMet_deCO2ase_bac"/>
</dbReference>
<dbReference type="InterPro" id="IPR016067">
    <property type="entry name" value="S-AdoMet_deCO2ase_core"/>
</dbReference>
<dbReference type="NCBIfam" id="TIGR03331">
    <property type="entry name" value="SAM_DCase_Eco"/>
    <property type="match status" value="1"/>
</dbReference>
<dbReference type="PANTHER" id="PTHR33866">
    <property type="entry name" value="S-ADENOSYLMETHIONINE DECARBOXYLASE PROENZYME"/>
    <property type="match status" value="1"/>
</dbReference>
<dbReference type="PANTHER" id="PTHR33866:SF1">
    <property type="entry name" value="S-ADENOSYLMETHIONINE DECARBOXYLASE PROENZYME"/>
    <property type="match status" value="1"/>
</dbReference>
<dbReference type="Pfam" id="PF02675">
    <property type="entry name" value="AdoMet_dc"/>
    <property type="match status" value="1"/>
</dbReference>
<dbReference type="PIRSF" id="PIRSF001356">
    <property type="entry name" value="SAM_decarboxylas"/>
    <property type="match status" value="1"/>
</dbReference>
<dbReference type="SUPFAM" id="SSF56276">
    <property type="entry name" value="S-adenosylmethionine decarboxylase"/>
    <property type="match status" value="1"/>
</dbReference>
<comment type="function">
    <text evidence="1">Catalyzes the decarboxylation of S-adenosylmethionine to S-adenosylmethioninamine (dcAdoMet), the propylamine donor required for the synthesis of the polyamines spermine and spermidine from the diamine putrescine.</text>
</comment>
<comment type="catalytic activity">
    <reaction evidence="1">
        <text>S-adenosyl-L-methionine + H(+) = S-adenosyl 3-(methylsulfanyl)propylamine + CO2</text>
        <dbReference type="Rhea" id="RHEA:15981"/>
        <dbReference type="ChEBI" id="CHEBI:15378"/>
        <dbReference type="ChEBI" id="CHEBI:16526"/>
        <dbReference type="ChEBI" id="CHEBI:57443"/>
        <dbReference type="ChEBI" id="CHEBI:59789"/>
        <dbReference type="EC" id="4.1.1.50"/>
    </reaction>
</comment>
<comment type="cofactor">
    <cofactor evidence="1">
        <name>pyruvate</name>
        <dbReference type="ChEBI" id="CHEBI:15361"/>
    </cofactor>
    <text evidence="1">Binds 1 pyruvoyl group covalently per subunit.</text>
</comment>
<comment type="pathway">
    <text evidence="1">Amine and polyamine biosynthesis; S-adenosylmethioninamine biosynthesis; S-adenosylmethioninamine from S-adenosyl-L-methionine: step 1/1.</text>
</comment>
<comment type="subunit">
    <text evidence="1">Heterooctamer of four alpha and four beta chains arranged as a tetramer of alpha/beta heterodimers.</text>
</comment>
<comment type="PTM">
    <text evidence="1">Is synthesized initially as an inactive proenzyme. Formation of the active enzyme involves a self-maturation process in which the active site pyruvoyl group is generated from an internal serine residue via an autocatalytic post-translational modification. Two non-identical subunits are generated from the proenzyme in this reaction, and the pyruvate is formed at the N-terminus of the alpha chain, which is derived from the carboxyl end of the proenzyme. The post-translation cleavage follows an unusual pathway, termed non-hydrolytic serinolysis, in which the side chain hydroxyl group of the serine supplies its oxygen atom to form the C-terminus of the beta chain, while the remainder of the serine residue undergoes an oxidative deamination to produce ammonia and the pyruvoyl group blocking the N-terminus of the alpha chain.</text>
</comment>
<comment type="similarity">
    <text evidence="1">Belongs to the prokaryotic AdoMetDC family. Type 2 subfamily.</text>
</comment>
<sequence length="264" mass="30415">MKKLKLHGFNNLTKSLSFCIYDICYAKTTEERDGYIAYIDELYNANRLTEILSETCSIIGANILNIARQDYEPQGASVTILVSEEPVDPKLIDKTEHPGPLPETVVAHLDKSHICVHTYPESHPEGGLCTFRADIEVSTCGVISPLKALNYLIHQLESDIVTIDYRVRGFTRDINGMKHFIDHEINSIQNFMSDDMKALYDMVDVNVYQENIFHTKMLLKEFDLKHYMFHTKPEDLTDSERQEITAALWKEMREIYYGRNMPAV</sequence>